<dbReference type="EC" id="5.4.1.3"/>
<dbReference type="EMBL" id="CP000909">
    <property type="protein sequence ID" value="ABY33429.1"/>
    <property type="molecule type" value="Genomic_DNA"/>
</dbReference>
<dbReference type="RefSeq" id="WP_012256085.1">
    <property type="nucleotide sequence ID" value="NC_010175.1"/>
</dbReference>
<dbReference type="RefSeq" id="YP_001633818.1">
    <property type="nucleotide sequence ID" value="NC_010175.1"/>
</dbReference>
<dbReference type="PDB" id="8APQ">
    <property type="method" value="X-ray"/>
    <property type="resolution" value="2.49 A"/>
    <property type="chains" value="A/B/C/D/E/F=1-409"/>
</dbReference>
<dbReference type="PDB" id="8APR">
    <property type="method" value="X-ray"/>
    <property type="resolution" value="2.10 A"/>
    <property type="chains" value="A/B/C=1-409"/>
</dbReference>
<dbReference type="PDBsum" id="8APQ"/>
<dbReference type="PDBsum" id="8APR"/>
<dbReference type="SMR" id="A9WC36"/>
<dbReference type="STRING" id="324602.Caur_0175"/>
<dbReference type="EnsemblBacteria" id="ABY33429">
    <property type="protein sequence ID" value="ABY33429"/>
    <property type="gene ID" value="Caur_0175"/>
</dbReference>
<dbReference type="KEGG" id="cau:Caur_0175"/>
<dbReference type="PATRIC" id="fig|324602.8.peg.202"/>
<dbReference type="eggNOG" id="COG1804">
    <property type="taxonomic scope" value="Bacteria"/>
</dbReference>
<dbReference type="HOGENOM" id="CLU_033975_0_1_0"/>
<dbReference type="InParanoid" id="A9WC36"/>
<dbReference type="BioCyc" id="MetaCyc:MONOMER-17293"/>
<dbReference type="BRENDA" id="5.4.1.3">
    <property type="organism ID" value="1352"/>
</dbReference>
<dbReference type="Proteomes" id="UP000002008">
    <property type="component" value="Chromosome"/>
</dbReference>
<dbReference type="GO" id="GO:0016867">
    <property type="term" value="F:intramolecular acyltransferase activity"/>
    <property type="evidence" value="ECO:0000314"/>
    <property type="project" value="UniProtKB"/>
</dbReference>
<dbReference type="GO" id="GO:0043427">
    <property type="term" value="P:carbon fixation by 3-hydroxypropionate cycle"/>
    <property type="evidence" value="ECO:0000314"/>
    <property type="project" value="UniProtKB"/>
</dbReference>
<dbReference type="Gene3D" id="3.40.50.10540">
    <property type="entry name" value="Crotonobetainyl-coa:carnitine coa-transferase, domain 1"/>
    <property type="match status" value="1"/>
</dbReference>
<dbReference type="Gene3D" id="3.30.1540.10">
    <property type="entry name" value="formyl-coa transferase, domain 3"/>
    <property type="match status" value="1"/>
</dbReference>
<dbReference type="InterPro" id="IPR050509">
    <property type="entry name" value="CoA-transferase_III"/>
</dbReference>
<dbReference type="InterPro" id="IPR003673">
    <property type="entry name" value="CoA-Trfase_fam_III"/>
</dbReference>
<dbReference type="InterPro" id="IPR044855">
    <property type="entry name" value="CoA-Trfase_III_dom3_sf"/>
</dbReference>
<dbReference type="InterPro" id="IPR023606">
    <property type="entry name" value="CoA-Trfase_III_dom_1_sf"/>
</dbReference>
<dbReference type="InterPro" id="IPR026347">
    <property type="entry name" value="Mct-like"/>
</dbReference>
<dbReference type="NCBIfam" id="TIGR04253">
    <property type="entry name" value="mesacon_CoA_iso"/>
    <property type="match status" value="1"/>
</dbReference>
<dbReference type="PANTHER" id="PTHR48228:SF5">
    <property type="entry name" value="ALPHA-METHYLACYL-COA RACEMASE"/>
    <property type="match status" value="1"/>
</dbReference>
<dbReference type="PANTHER" id="PTHR48228">
    <property type="entry name" value="SUCCINYL-COA--D-CITRAMALATE COA-TRANSFERASE"/>
    <property type="match status" value="1"/>
</dbReference>
<dbReference type="Pfam" id="PF02515">
    <property type="entry name" value="CoA_transf_3"/>
    <property type="match status" value="1"/>
</dbReference>
<dbReference type="SUPFAM" id="SSF89796">
    <property type="entry name" value="CoA-transferase family III (CaiB/BaiF)"/>
    <property type="match status" value="1"/>
</dbReference>
<proteinExistence type="evidence at protein level"/>
<gene>
    <name type="primary">mct</name>
    <name type="ordered locus">Caur_0175</name>
</gene>
<name>MCT_CHLAA</name>
<evidence type="ECO:0000250" key="1"/>
<evidence type="ECO:0000269" key="2">
    <source>
    </source>
</evidence>
<evidence type="ECO:0000305" key="3"/>
<evidence type="ECO:0007829" key="4">
    <source>
        <dbReference type="PDB" id="8APQ"/>
    </source>
</evidence>
<evidence type="ECO:0007829" key="5">
    <source>
        <dbReference type="PDB" id="8APR"/>
    </source>
</evidence>
<keyword id="KW-0002">3D-structure</keyword>
<keyword id="KW-0120">Carbon dioxide fixation</keyword>
<keyword id="KW-0413">Isomerase</keyword>
<keyword id="KW-1185">Reference proteome</keyword>
<comment type="function">
    <text evidence="2">Involved in the glyoxylate assimilation cycle used to regenerate acetyl-CoA and produce pyruvate as universal precursor for biosynthesis. This reaction involves an intramolecular CoA transferase that catalyzes the reversible transfer of the CoA moiety from the C1-carboxyl group of mesaconyl-CoA to the C4-carboxyl group. It does not require free mesaconate as CoA acceptor.</text>
</comment>
<comment type="catalytic activity">
    <reaction evidence="2">
        <text>2-methylfumaryl-CoA = 3-methylfumaryl-CoA</text>
        <dbReference type="Rhea" id="RHEA:38267"/>
        <dbReference type="ChEBI" id="CHEBI:75635"/>
        <dbReference type="ChEBI" id="CHEBI:75636"/>
        <dbReference type="EC" id="5.4.1.3"/>
    </reaction>
</comment>
<comment type="activity regulation">
    <text evidence="2">Partially inhibited by hydroxylamine.</text>
</comment>
<comment type="biophysicochemical properties">
    <kinetics>
        <KM evidence="2">240 uM for 2-methylfumaryl-CoA</KM>
        <Vmax evidence="2">520.0 umol/min/mg enzyme</Vmax>
        <text>kcat is 840 sec(-1) for isomerase activity with 2-methylfumaryl-CoA.</text>
    </kinetics>
    <phDependence>
        <text evidence="2">Optimum pH is between 7.5 and 7.8.</text>
    </phDependence>
    <temperatureDependence>
        <text evidence="2">Optimum temperature is 55 degrees Celsius.</text>
    </temperatureDependence>
</comment>
<comment type="subunit">
    <text evidence="2">Homodimer.</text>
</comment>
<comment type="induction">
    <text evidence="2">Under autotrophic growth conditions.</text>
</comment>
<comment type="similarity">
    <text evidence="3">Belongs to the CoA-transferase III family. Mesaconyl-CoA isomerase subfamily.</text>
</comment>
<accession>A9WC36</accession>
<feature type="chain" id="PRO_0000429583" description="2-methylfumaryl-CoA isomerase">
    <location>
        <begin position="1"/>
        <end position="409"/>
    </location>
</feature>
<feature type="active site" description="Nucleophile" evidence="1">
    <location>
        <position position="165"/>
    </location>
</feature>
<feature type="turn" evidence="5">
    <location>
        <begin position="4"/>
        <end position="7"/>
    </location>
</feature>
<feature type="strand" evidence="5">
    <location>
        <begin position="9"/>
        <end position="13"/>
    </location>
</feature>
<feature type="helix" evidence="5">
    <location>
        <begin position="18"/>
        <end position="28"/>
    </location>
</feature>
<feature type="strand" evidence="5">
    <location>
        <begin position="32"/>
        <end position="37"/>
    </location>
</feature>
<feature type="turn" evidence="5">
    <location>
        <begin position="43"/>
        <end position="46"/>
    </location>
</feature>
<feature type="strand" evidence="5">
    <location>
        <begin position="48"/>
        <end position="50"/>
    </location>
</feature>
<feature type="strand" evidence="4">
    <location>
        <begin position="54"/>
        <end position="57"/>
    </location>
</feature>
<feature type="helix" evidence="5">
    <location>
        <begin position="58"/>
        <end position="63"/>
    </location>
</feature>
<feature type="strand" evidence="5">
    <location>
        <begin position="68"/>
        <end position="72"/>
    </location>
</feature>
<feature type="helix" evidence="5">
    <location>
        <begin position="77"/>
        <end position="87"/>
    </location>
</feature>
<feature type="strand" evidence="5">
    <location>
        <begin position="96"/>
        <end position="99"/>
    </location>
</feature>
<feature type="helix" evidence="5">
    <location>
        <begin position="105"/>
        <end position="107"/>
    </location>
</feature>
<feature type="helix" evidence="5">
    <location>
        <begin position="109"/>
        <end position="112"/>
    </location>
</feature>
<feature type="turn" evidence="5">
    <location>
        <begin position="113"/>
        <end position="115"/>
    </location>
</feature>
<feature type="strand" evidence="5">
    <location>
        <begin position="120"/>
        <end position="127"/>
    </location>
</feature>
<feature type="helix" evidence="5">
    <location>
        <begin position="135"/>
        <end position="138"/>
    </location>
</feature>
<feature type="helix" evidence="5">
    <location>
        <begin position="139"/>
        <end position="142"/>
    </location>
</feature>
<feature type="helix" evidence="5">
    <location>
        <begin position="144"/>
        <end position="147"/>
    </location>
</feature>
<feature type="helix" evidence="5">
    <location>
        <begin position="163"/>
        <end position="186"/>
    </location>
</feature>
<feature type="strand" evidence="5">
    <location>
        <begin position="191"/>
        <end position="195"/>
    </location>
</feature>
<feature type="helix" evidence="5">
    <location>
        <begin position="196"/>
        <end position="206"/>
    </location>
</feature>
<feature type="helix" evidence="5">
    <location>
        <begin position="209"/>
        <end position="214"/>
    </location>
</feature>
<feature type="strand" evidence="5">
    <location>
        <begin position="230"/>
        <end position="236"/>
    </location>
</feature>
<feature type="strand" evidence="5">
    <location>
        <begin position="242"/>
        <end position="247"/>
    </location>
</feature>
<feature type="helix" evidence="5">
    <location>
        <begin position="250"/>
        <end position="259"/>
    </location>
</feature>
<feature type="helix" evidence="5">
    <location>
        <begin position="263"/>
        <end position="273"/>
    </location>
</feature>
<feature type="helix" evidence="5">
    <location>
        <begin position="280"/>
        <end position="285"/>
    </location>
</feature>
<feature type="helix" evidence="5">
    <location>
        <begin position="287"/>
        <end position="299"/>
    </location>
</feature>
<feature type="helix" evidence="5">
    <location>
        <begin position="303"/>
        <end position="313"/>
    </location>
</feature>
<feature type="strand" evidence="5">
    <location>
        <begin position="317"/>
        <end position="319"/>
    </location>
</feature>
<feature type="helix" evidence="5">
    <location>
        <begin position="323"/>
        <end position="329"/>
    </location>
</feature>
<feature type="helix" evidence="5">
    <location>
        <begin position="331"/>
        <end position="333"/>
    </location>
</feature>
<feature type="strand" evidence="5">
    <location>
        <begin position="340"/>
        <end position="345"/>
    </location>
</feature>
<feature type="turn" evidence="5">
    <location>
        <begin position="346"/>
        <end position="348"/>
    </location>
</feature>
<feature type="strand" evidence="5">
    <location>
        <begin position="349"/>
        <end position="354"/>
    </location>
</feature>
<feature type="turn" evidence="5">
    <location>
        <begin position="374"/>
        <end position="377"/>
    </location>
</feature>
<feature type="helix" evidence="5">
    <location>
        <begin position="378"/>
        <end position="384"/>
    </location>
</feature>
<feature type="helix" evidence="5">
    <location>
        <begin position="390"/>
        <end position="398"/>
    </location>
</feature>
<feature type="strand" evidence="5">
    <location>
        <begin position="401"/>
        <end position="403"/>
    </location>
</feature>
<protein>
    <recommendedName>
        <fullName>2-methylfumaryl-CoA isomerase</fullName>
        <ecNumber>5.4.1.3</ecNumber>
    </recommendedName>
</protein>
<sequence length="409" mass="44813">MKGILHGLRVVEGSAFVAAPLGGMTLAQLGADVIRFDPIGGGLDYKRWPVTLDGKHSLFWAGLNKGKRSIAIDIRHPRGQELLTQLICAPGEHAGLFITNFPARGWLSYDELKRHRADLIMVNLVGRRDGGSEVDYTVNPQLGLPFMTGPVTTPDVVNHVLPAWDIVTGQMIALGLLAAERHRRLTGEGQLVKIALKDVGLAMIGHLGMIAEVMINDTDRPRQGNYLYGAFGRDFETLDGKRVMVVGLTDLQWKALGKATGLTDAFNALGARLGLNMDEEGDRFRARHEIAALLEPWFHARTLAEVRRIFEQHRVTWAPYRTVREAIAQDPDCSTDNPMFAMVEQPGIGSYLMPGSPLDFTAVPRLPVQPAPRLGEHTDEILLEVLGLSEAEVGRLHDEGIVAGPDRAA</sequence>
<organism>
    <name type="scientific">Chloroflexus aurantiacus (strain ATCC 29366 / DSM 635 / J-10-fl)</name>
    <dbReference type="NCBI Taxonomy" id="324602"/>
    <lineage>
        <taxon>Bacteria</taxon>
        <taxon>Bacillati</taxon>
        <taxon>Chloroflexota</taxon>
        <taxon>Chloroflexia</taxon>
        <taxon>Chloroflexales</taxon>
        <taxon>Chloroflexineae</taxon>
        <taxon>Chloroflexaceae</taxon>
        <taxon>Chloroflexus</taxon>
    </lineage>
</organism>
<reference key="1">
    <citation type="journal article" date="2011" name="BMC Genomics">
        <title>Complete genome sequence of the filamentous anoxygenic phototrophic bacterium Chloroflexus aurantiacus.</title>
        <authorList>
            <person name="Tang K.H."/>
            <person name="Barry K."/>
            <person name="Chertkov O."/>
            <person name="Dalin E."/>
            <person name="Han C.S."/>
            <person name="Hauser L.J."/>
            <person name="Honchak B.M."/>
            <person name="Karbach L.E."/>
            <person name="Land M.L."/>
            <person name="Lapidus A."/>
            <person name="Larimer F.W."/>
            <person name="Mikhailova N."/>
            <person name="Pitluck S."/>
            <person name="Pierson B.K."/>
            <person name="Blankenship R.E."/>
        </authorList>
    </citation>
    <scope>NUCLEOTIDE SEQUENCE [LARGE SCALE GENOMIC DNA]</scope>
    <source>
        <strain>ATCC 29366 / DSM 635 / J-10-fl</strain>
    </source>
</reference>
<reference key="2">
    <citation type="journal article" date="2009" name="Proc. Natl. Acad. Sci. U.S.A.">
        <title>Identifying the missing steps of the autotrophic 3-hydroxypropionate CO2 fixation cycle in Chloroflexus aurantiacus.</title>
        <authorList>
            <person name="Zarzycki J."/>
            <person name="Brecht V."/>
            <person name="Muller M."/>
            <person name="Fuchs G."/>
        </authorList>
    </citation>
    <scope>FUNCTION</scope>
    <scope>CATALYTIC ACTIVITY</scope>
    <scope>BIOPHYSICOCHEMICAL PROPERTIES</scope>
    <scope>ACTIVITY REGULATION</scope>
    <scope>INDUCTION</scope>
    <scope>SUBUNIT</scope>
    <source>
        <strain>DSM 636 / Ok-70-fl</strain>
    </source>
</reference>